<keyword id="KW-0324">Glycolysis</keyword>
<keyword id="KW-0456">Lyase</keyword>
<keyword id="KW-0479">Metal-binding</keyword>
<keyword id="KW-0862">Zinc</keyword>
<proteinExistence type="inferred from homology"/>
<evidence type="ECO:0000250" key="1"/>
<evidence type="ECO:0000305" key="2"/>
<dbReference type="EC" id="4.1.2.13"/>
<dbReference type="EMBL" id="AF005512">
    <property type="protein sequence ID" value="AAD37811.1"/>
    <property type="molecule type" value="Genomic_DNA"/>
</dbReference>
<dbReference type="SMR" id="Q9XDP3"/>
<dbReference type="UniPathway" id="UPA00109">
    <property type="reaction ID" value="UER00183"/>
</dbReference>
<dbReference type="GO" id="GO:0004332">
    <property type="term" value="F:fructose-bisphosphate aldolase activity"/>
    <property type="evidence" value="ECO:0007669"/>
    <property type="project" value="UniProtKB-EC"/>
</dbReference>
<dbReference type="GO" id="GO:0008270">
    <property type="term" value="F:zinc ion binding"/>
    <property type="evidence" value="ECO:0007669"/>
    <property type="project" value="InterPro"/>
</dbReference>
<dbReference type="GO" id="GO:0006096">
    <property type="term" value="P:glycolytic process"/>
    <property type="evidence" value="ECO:0007669"/>
    <property type="project" value="UniProtKB-UniPathway"/>
</dbReference>
<dbReference type="CDD" id="cd00947">
    <property type="entry name" value="TBP_aldolase_IIB"/>
    <property type="match status" value="1"/>
</dbReference>
<dbReference type="FunFam" id="3.20.20.70:FF:000111">
    <property type="entry name" value="Fructose-1,6-bisphosphate aldolase"/>
    <property type="match status" value="1"/>
</dbReference>
<dbReference type="Gene3D" id="3.20.20.70">
    <property type="entry name" value="Aldolase class I"/>
    <property type="match status" value="1"/>
</dbReference>
<dbReference type="InterPro" id="IPR013785">
    <property type="entry name" value="Aldolase_TIM"/>
</dbReference>
<dbReference type="InterPro" id="IPR050246">
    <property type="entry name" value="Class_II_FBP_aldolase"/>
</dbReference>
<dbReference type="InterPro" id="IPR000771">
    <property type="entry name" value="FBA_II"/>
</dbReference>
<dbReference type="InterPro" id="IPR006412">
    <property type="entry name" value="Fruct_bisP_Calv"/>
</dbReference>
<dbReference type="NCBIfam" id="TIGR00167">
    <property type="entry name" value="cbbA"/>
    <property type="match status" value="1"/>
</dbReference>
<dbReference type="NCBIfam" id="TIGR01521">
    <property type="entry name" value="FruBisAldo_II_B"/>
    <property type="match status" value="1"/>
</dbReference>
<dbReference type="PANTHER" id="PTHR30304">
    <property type="entry name" value="D-TAGATOSE-1,6-BISPHOSPHATE ALDOLASE"/>
    <property type="match status" value="1"/>
</dbReference>
<dbReference type="PANTHER" id="PTHR30304:SF0">
    <property type="entry name" value="D-TAGATOSE-1,6-BISPHOSPHATE ALDOLASE SUBUNIT GATY-RELATED"/>
    <property type="match status" value="1"/>
</dbReference>
<dbReference type="Pfam" id="PF01116">
    <property type="entry name" value="F_bP_aldolase"/>
    <property type="match status" value="1"/>
</dbReference>
<dbReference type="PIRSF" id="PIRSF001359">
    <property type="entry name" value="F_bP_aldolase_II"/>
    <property type="match status" value="1"/>
</dbReference>
<dbReference type="SUPFAM" id="SSF51569">
    <property type="entry name" value="Aldolase"/>
    <property type="match status" value="1"/>
</dbReference>
<dbReference type="PROSITE" id="PS00602">
    <property type="entry name" value="ALDOLASE_CLASS_II_1"/>
    <property type="match status" value="1"/>
</dbReference>
<dbReference type="PROSITE" id="PS00806">
    <property type="entry name" value="ALDOLASE_CLASS_II_2"/>
    <property type="match status" value="1"/>
</dbReference>
<feature type="chain" id="PRO_0000178724" description="Fructose-bisphosphate aldolase">
    <location>
        <begin position="1"/>
        <end position="359"/>
    </location>
</feature>
<feature type="active site" description="Proton donor" evidence="1">
    <location>
        <position position="83"/>
    </location>
</feature>
<feature type="binding site" evidence="1">
    <location>
        <position position="50"/>
    </location>
    <ligand>
        <name>D-glyceraldehyde 3-phosphate</name>
        <dbReference type="ChEBI" id="CHEBI:59776"/>
    </ligand>
</feature>
<feature type="binding site" evidence="1">
    <location>
        <position position="84"/>
    </location>
    <ligand>
        <name>Zn(2+)</name>
        <dbReference type="ChEBI" id="CHEBI:29105"/>
        <label>1</label>
        <note>catalytic</note>
    </ligand>
</feature>
<feature type="binding site" evidence="1">
    <location>
        <position position="105"/>
    </location>
    <ligand>
        <name>Zn(2+)</name>
        <dbReference type="ChEBI" id="CHEBI:29105"/>
        <label>2</label>
    </ligand>
</feature>
<feature type="binding site" evidence="1">
    <location>
        <position position="142"/>
    </location>
    <ligand>
        <name>Zn(2+)</name>
        <dbReference type="ChEBI" id="CHEBI:29105"/>
        <label>2</label>
    </ligand>
</feature>
<feature type="binding site" evidence="1">
    <location>
        <position position="198"/>
    </location>
    <ligand>
        <name>Zn(2+)</name>
        <dbReference type="ChEBI" id="CHEBI:29105"/>
        <label>1</label>
        <note>catalytic</note>
    </ligand>
</feature>
<feature type="binding site" evidence="1">
    <location>
        <position position="199"/>
    </location>
    <ligand>
        <name>dihydroxyacetone phosphate</name>
        <dbReference type="ChEBI" id="CHEBI:57642"/>
    </ligand>
</feature>
<feature type="binding site" evidence="1">
    <location>
        <position position="232"/>
    </location>
    <ligand>
        <name>Zn(2+)</name>
        <dbReference type="ChEBI" id="CHEBI:29105"/>
        <label>1</label>
        <note>catalytic</note>
    </ligand>
</feature>
<feature type="binding site" evidence="1">
    <location>
        <begin position="233"/>
        <end position="235"/>
    </location>
    <ligand>
        <name>dihydroxyacetone phosphate</name>
        <dbReference type="ChEBI" id="CHEBI:57642"/>
    </ligand>
</feature>
<feature type="binding site" evidence="1">
    <location>
        <begin position="275"/>
        <end position="278"/>
    </location>
    <ligand>
        <name>dihydroxyacetone phosphate</name>
        <dbReference type="ChEBI" id="CHEBI:57642"/>
    </ligand>
</feature>
<name>ALF_NOSCO</name>
<accession>Q9XDP3</accession>
<comment type="function">
    <text evidence="1">Catalyzes the aldol condensation of dihydroxyacetone phosphate (DHAP or glycerone-phosphate) with glyceraldehyde 3-phosphate (G3P) to form fructose 1,6-bisphosphate (FBP) in gluconeogenesis and the reverse reaction in glycolysis.</text>
</comment>
<comment type="catalytic activity">
    <reaction>
        <text>beta-D-fructose 1,6-bisphosphate = D-glyceraldehyde 3-phosphate + dihydroxyacetone phosphate</text>
        <dbReference type="Rhea" id="RHEA:14729"/>
        <dbReference type="ChEBI" id="CHEBI:32966"/>
        <dbReference type="ChEBI" id="CHEBI:57642"/>
        <dbReference type="ChEBI" id="CHEBI:59776"/>
        <dbReference type="EC" id="4.1.2.13"/>
    </reaction>
</comment>
<comment type="cofactor">
    <cofactor evidence="1">
        <name>Zn(2+)</name>
        <dbReference type="ChEBI" id="CHEBI:29105"/>
    </cofactor>
    <text evidence="1">Binds 2 Zn(2+) ions per subunit. One is catalytic and the other provides a structural contribution.</text>
</comment>
<comment type="pathway">
    <text>Carbohydrate degradation; glycolysis; D-glyceraldehyde 3-phosphate and glycerone phosphate from D-glucose: step 4/4.</text>
</comment>
<comment type="similarity">
    <text evidence="2">Belongs to the class II fructose-bisphosphate aldolase family.</text>
</comment>
<gene>
    <name type="primary">fba</name>
    <name type="synonym">fda</name>
</gene>
<reference key="1">
    <citation type="submission" date="1997-05" db="EMBL/GenBank/DDBJ databases">
        <title>Isolation, characterization and expression of a class II fructose-1,6-bisphosphate aldolase gene from Nostoc commune UTEX 584 (Cyanobacteria).</title>
        <authorList>
            <person name="Joardar V."/>
            <person name="Ehling-Schulz M."/>
            <person name="Smith S.C."/>
            <person name="Scherer S."/>
            <person name="Potts M."/>
        </authorList>
    </citation>
    <scope>NUCLEOTIDE SEQUENCE [GENOMIC DNA]</scope>
    <source>
        <strain>UTEX 584 / SAG 1453-5</strain>
    </source>
</reference>
<sequence length="359" mass="38698">MALVPLRLLLDHAAENGYGIPAFNVNNLEQIQAILKAAVETDSPVILQASRGARAYAGENFLRHLILAAVETYPHIPIVMHQDHGNAPATCYSAIKNNFTSVMMDGSLEADAKTPASFEYNVNVTREVVNVAHALGVSVEGELGCLGSLETGAGEAEDGHGFEGTLDHSQLLTDPDEAVEFVEATQVDALAVAIGTSHGAYKFTRKPTGEILAISRIEEIHRRLPNTHLVMHGSSSVPEDLLALINQYGGAIPETYGVPVEEIQKGIKSGVRKVNIDTDNRLAITAAVREACAKKPEEFDPRHFLKPSITYMQKVCAERYQQFGTAGNASKIKQISLEDFAAKYAKGELNVVTKAAAKV</sequence>
<organism>
    <name type="scientific">Nostoc commune</name>
    <dbReference type="NCBI Taxonomy" id="1178"/>
    <lineage>
        <taxon>Bacteria</taxon>
        <taxon>Bacillati</taxon>
        <taxon>Cyanobacteriota</taxon>
        <taxon>Cyanophyceae</taxon>
        <taxon>Nostocales</taxon>
        <taxon>Nostocaceae</taxon>
        <taxon>Nostoc</taxon>
    </lineage>
</organism>
<protein>
    <recommendedName>
        <fullName>Fructose-bisphosphate aldolase</fullName>
        <shortName>FBP aldolase</shortName>
        <shortName>FBPA</shortName>
        <ecNumber>4.1.2.13</ecNumber>
    </recommendedName>
    <alternativeName>
        <fullName>Fructose-1,6-bisphosphate aldolase</fullName>
    </alternativeName>
</protein>